<gene>
    <name evidence="1" type="primary">dnaJ</name>
    <name type="ordered locus">GK2503</name>
</gene>
<name>DNAJ_GEOKA</name>
<feature type="chain" id="PRO_0000070789" description="Chaperone protein DnaJ">
    <location>
        <begin position="1"/>
        <end position="382"/>
    </location>
</feature>
<feature type="domain" description="J" evidence="1">
    <location>
        <begin position="5"/>
        <end position="69"/>
    </location>
</feature>
<feature type="repeat" description="CXXCXGXG motif">
    <location>
        <begin position="150"/>
        <end position="157"/>
    </location>
</feature>
<feature type="repeat" description="CXXCXGXG motif">
    <location>
        <begin position="167"/>
        <end position="174"/>
    </location>
</feature>
<feature type="repeat" description="CXXCXGXG motif">
    <location>
        <begin position="193"/>
        <end position="200"/>
    </location>
</feature>
<feature type="repeat" description="CXXCXGXG motif">
    <location>
        <begin position="207"/>
        <end position="214"/>
    </location>
</feature>
<feature type="zinc finger region" description="CR-type" evidence="1">
    <location>
        <begin position="137"/>
        <end position="219"/>
    </location>
</feature>
<feature type="region of interest" description="Disordered" evidence="2">
    <location>
        <begin position="154"/>
        <end position="175"/>
    </location>
</feature>
<feature type="binding site" evidence="1">
    <location>
        <position position="150"/>
    </location>
    <ligand>
        <name>Zn(2+)</name>
        <dbReference type="ChEBI" id="CHEBI:29105"/>
        <label>1</label>
    </ligand>
</feature>
<feature type="binding site" evidence="1">
    <location>
        <position position="153"/>
    </location>
    <ligand>
        <name>Zn(2+)</name>
        <dbReference type="ChEBI" id="CHEBI:29105"/>
        <label>1</label>
    </ligand>
</feature>
<feature type="binding site" evidence="1">
    <location>
        <position position="167"/>
    </location>
    <ligand>
        <name>Zn(2+)</name>
        <dbReference type="ChEBI" id="CHEBI:29105"/>
        <label>2</label>
    </ligand>
</feature>
<feature type="binding site" evidence="1">
    <location>
        <position position="170"/>
    </location>
    <ligand>
        <name>Zn(2+)</name>
        <dbReference type="ChEBI" id="CHEBI:29105"/>
        <label>2</label>
    </ligand>
</feature>
<feature type="binding site" evidence="1">
    <location>
        <position position="193"/>
    </location>
    <ligand>
        <name>Zn(2+)</name>
        <dbReference type="ChEBI" id="CHEBI:29105"/>
        <label>2</label>
    </ligand>
</feature>
<feature type="binding site" evidence="1">
    <location>
        <position position="196"/>
    </location>
    <ligand>
        <name>Zn(2+)</name>
        <dbReference type="ChEBI" id="CHEBI:29105"/>
        <label>2</label>
    </ligand>
</feature>
<feature type="binding site" evidence="1">
    <location>
        <position position="207"/>
    </location>
    <ligand>
        <name>Zn(2+)</name>
        <dbReference type="ChEBI" id="CHEBI:29105"/>
        <label>1</label>
    </ligand>
</feature>
<feature type="binding site" evidence="1">
    <location>
        <position position="210"/>
    </location>
    <ligand>
        <name>Zn(2+)</name>
        <dbReference type="ChEBI" id="CHEBI:29105"/>
        <label>1</label>
    </ligand>
</feature>
<protein>
    <recommendedName>
        <fullName evidence="1">Chaperone protein DnaJ</fullName>
    </recommendedName>
</protein>
<accession>Q5KWZ8</accession>
<proteinExistence type="inferred from homology"/>
<reference key="1">
    <citation type="journal article" date="2004" name="Nucleic Acids Res.">
        <title>Thermoadaptation trait revealed by the genome sequence of thermophilic Geobacillus kaustophilus.</title>
        <authorList>
            <person name="Takami H."/>
            <person name="Takaki Y."/>
            <person name="Chee G.-J."/>
            <person name="Nishi S."/>
            <person name="Shimamura S."/>
            <person name="Suzuki H."/>
            <person name="Matsui S."/>
            <person name="Uchiyama I."/>
        </authorList>
    </citation>
    <scope>NUCLEOTIDE SEQUENCE [LARGE SCALE GENOMIC DNA]</scope>
    <source>
        <strain>HTA426</strain>
    </source>
</reference>
<evidence type="ECO:0000255" key="1">
    <source>
        <dbReference type="HAMAP-Rule" id="MF_01152"/>
    </source>
</evidence>
<evidence type="ECO:0000256" key="2">
    <source>
        <dbReference type="SAM" id="MobiDB-lite"/>
    </source>
</evidence>
<comment type="function">
    <text evidence="1">Participates actively in the response to hyperosmotic and heat shock by preventing the aggregation of stress-denatured proteins and by disaggregating proteins, also in an autonomous, DnaK-independent fashion. Unfolded proteins bind initially to DnaJ; upon interaction with the DnaJ-bound protein, DnaK hydrolyzes its bound ATP, resulting in the formation of a stable complex. GrpE releases ADP from DnaK; ATP binding to DnaK triggers the release of the substrate protein, thus completing the reaction cycle. Several rounds of ATP-dependent interactions between DnaJ, DnaK and GrpE are required for fully efficient folding. Also involved, together with DnaK and GrpE, in the DNA replication of plasmids through activation of initiation proteins.</text>
</comment>
<comment type="cofactor">
    <cofactor evidence="1">
        <name>Zn(2+)</name>
        <dbReference type="ChEBI" id="CHEBI:29105"/>
    </cofactor>
    <text evidence="1">Binds 2 Zn(2+) ions per monomer.</text>
</comment>
<comment type="subunit">
    <text evidence="1">Homodimer.</text>
</comment>
<comment type="subcellular location">
    <subcellularLocation>
        <location evidence="1">Cytoplasm</location>
    </subcellularLocation>
</comment>
<comment type="domain">
    <text evidence="1">The J domain is necessary and sufficient to stimulate DnaK ATPase activity. Zinc center 1 plays an important role in the autonomous, DnaK-independent chaperone activity of DnaJ. Zinc center 2 is essential for interaction with DnaK and for DnaJ activity.</text>
</comment>
<comment type="similarity">
    <text evidence="1">Belongs to the DnaJ family.</text>
</comment>
<organism>
    <name type="scientific">Geobacillus kaustophilus (strain HTA426)</name>
    <dbReference type="NCBI Taxonomy" id="235909"/>
    <lineage>
        <taxon>Bacteria</taxon>
        <taxon>Bacillati</taxon>
        <taxon>Bacillota</taxon>
        <taxon>Bacilli</taxon>
        <taxon>Bacillales</taxon>
        <taxon>Anoxybacillaceae</taxon>
        <taxon>Geobacillus</taxon>
        <taxon>Geobacillus thermoleovorans group</taxon>
    </lineage>
</organism>
<sequence>MAKRDYYEILGVSKNATKDEIKKAYRKLSKQYHPDVNKAPDAAEKFKEIKEAYEVLSDDEKRARYDRFGHADPNETFGGGGFQGGGFDFGGFSGFGGFEDIFETFFGAGPRRRASGPRKGADVEYMMTLTFEEAAFGKETEIEIPREETCDTCQGSGAKPGTSPTSCPHCHGSGQVTSEQATPFGRIVNRRTCPVCGGTGRYIPEKCPTCGGTGRVKRRKKIHVKIPAGVDDGQQLRVAGQGEPGVNGGPPGDLYIIFRVEPHEFFKRDGDDIYCEVPLSFAQAALGDEIEVPTLHGHVKLKIPAGTQTGTRFRLKGKGVPNVRGYGQGDQHVIVRVVTPTKLTEKQKQLLREFERLGGDTMHDGPHGRFFEKVKKAFKGEA</sequence>
<dbReference type="EMBL" id="BA000043">
    <property type="protein sequence ID" value="BAD76788.1"/>
    <property type="molecule type" value="Genomic_DNA"/>
</dbReference>
<dbReference type="RefSeq" id="WP_011231982.1">
    <property type="nucleotide sequence ID" value="NC_006510.1"/>
</dbReference>
<dbReference type="SMR" id="Q5KWZ8"/>
<dbReference type="STRING" id="235909.GK2503"/>
<dbReference type="GeneID" id="32064384"/>
<dbReference type="KEGG" id="gka:GK2503"/>
<dbReference type="eggNOG" id="COG0484">
    <property type="taxonomic scope" value="Bacteria"/>
</dbReference>
<dbReference type="HOGENOM" id="CLU_017633_0_7_9"/>
<dbReference type="Proteomes" id="UP000001172">
    <property type="component" value="Chromosome"/>
</dbReference>
<dbReference type="GO" id="GO:0005737">
    <property type="term" value="C:cytoplasm"/>
    <property type="evidence" value="ECO:0007669"/>
    <property type="project" value="UniProtKB-SubCell"/>
</dbReference>
<dbReference type="GO" id="GO:0005524">
    <property type="term" value="F:ATP binding"/>
    <property type="evidence" value="ECO:0007669"/>
    <property type="project" value="InterPro"/>
</dbReference>
<dbReference type="GO" id="GO:0031072">
    <property type="term" value="F:heat shock protein binding"/>
    <property type="evidence" value="ECO:0007669"/>
    <property type="project" value="InterPro"/>
</dbReference>
<dbReference type="GO" id="GO:0051082">
    <property type="term" value="F:unfolded protein binding"/>
    <property type="evidence" value="ECO:0007669"/>
    <property type="project" value="UniProtKB-UniRule"/>
</dbReference>
<dbReference type="GO" id="GO:0008270">
    <property type="term" value="F:zinc ion binding"/>
    <property type="evidence" value="ECO:0007669"/>
    <property type="project" value="UniProtKB-UniRule"/>
</dbReference>
<dbReference type="GO" id="GO:0051085">
    <property type="term" value="P:chaperone cofactor-dependent protein refolding"/>
    <property type="evidence" value="ECO:0007669"/>
    <property type="project" value="TreeGrafter"/>
</dbReference>
<dbReference type="GO" id="GO:0006260">
    <property type="term" value="P:DNA replication"/>
    <property type="evidence" value="ECO:0007669"/>
    <property type="project" value="UniProtKB-KW"/>
</dbReference>
<dbReference type="GO" id="GO:0042026">
    <property type="term" value="P:protein refolding"/>
    <property type="evidence" value="ECO:0007669"/>
    <property type="project" value="TreeGrafter"/>
</dbReference>
<dbReference type="GO" id="GO:0009408">
    <property type="term" value="P:response to heat"/>
    <property type="evidence" value="ECO:0007669"/>
    <property type="project" value="InterPro"/>
</dbReference>
<dbReference type="CDD" id="cd06257">
    <property type="entry name" value="DnaJ"/>
    <property type="match status" value="1"/>
</dbReference>
<dbReference type="CDD" id="cd10747">
    <property type="entry name" value="DnaJ_C"/>
    <property type="match status" value="1"/>
</dbReference>
<dbReference type="CDD" id="cd10719">
    <property type="entry name" value="DnaJ_zf"/>
    <property type="match status" value="1"/>
</dbReference>
<dbReference type="FunFam" id="1.10.287.110:FF:000031">
    <property type="entry name" value="Molecular chaperone DnaJ"/>
    <property type="match status" value="1"/>
</dbReference>
<dbReference type="FunFam" id="2.10.230.10:FF:000002">
    <property type="entry name" value="Molecular chaperone DnaJ"/>
    <property type="match status" value="1"/>
</dbReference>
<dbReference type="FunFam" id="2.60.260.20:FF:000004">
    <property type="entry name" value="Molecular chaperone DnaJ"/>
    <property type="match status" value="1"/>
</dbReference>
<dbReference type="FunFam" id="2.60.260.20:FF:000009">
    <property type="entry name" value="Putative Mitochondrial DnaJ chaperone"/>
    <property type="match status" value="1"/>
</dbReference>
<dbReference type="Gene3D" id="1.10.287.110">
    <property type="entry name" value="DnaJ domain"/>
    <property type="match status" value="1"/>
</dbReference>
<dbReference type="Gene3D" id="2.10.230.10">
    <property type="entry name" value="Heat shock protein DnaJ, cysteine-rich domain"/>
    <property type="match status" value="1"/>
</dbReference>
<dbReference type="Gene3D" id="2.60.260.20">
    <property type="entry name" value="Urease metallochaperone UreE, N-terminal domain"/>
    <property type="match status" value="2"/>
</dbReference>
<dbReference type="HAMAP" id="MF_01152">
    <property type="entry name" value="DnaJ"/>
    <property type="match status" value="1"/>
</dbReference>
<dbReference type="InterPro" id="IPR012724">
    <property type="entry name" value="DnaJ"/>
</dbReference>
<dbReference type="InterPro" id="IPR002939">
    <property type="entry name" value="DnaJ_C"/>
</dbReference>
<dbReference type="InterPro" id="IPR001623">
    <property type="entry name" value="DnaJ_domain"/>
</dbReference>
<dbReference type="InterPro" id="IPR018253">
    <property type="entry name" value="DnaJ_domain_CS"/>
</dbReference>
<dbReference type="InterPro" id="IPR008971">
    <property type="entry name" value="HSP40/DnaJ_pept-bd"/>
</dbReference>
<dbReference type="InterPro" id="IPR001305">
    <property type="entry name" value="HSP_DnaJ_Cys-rich_dom"/>
</dbReference>
<dbReference type="InterPro" id="IPR036410">
    <property type="entry name" value="HSP_DnaJ_Cys-rich_dom_sf"/>
</dbReference>
<dbReference type="InterPro" id="IPR036869">
    <property type="entry name" value="J_dom_sf"/>
</dbReference>
<dbReference type="NCBIfam" id="TIGR02349">
    <property type="entry name" value="DnaJ_bact"/>
    <property type="match status" value="1"/>
</dbReference>
<dbReference type="NCBIfam" id="NF008035">
    <property type="entry name" value="PRK10767.1"/>
    <property type="match status" value="1"/>
</dbReference>
<dbReference type="NCBIfam" id="NF010869">
    <property type="entry name" value="PRK14276.1"/>
    <property type="match status" value="1"/>
</dbReference>
<dbReference type="NCBIfam" id="NF010873">
    <property type="entry name" value="PRK14280.1"/>
    <property type="match status" value="1"/>
</dbReference>
<dbReference type="PANTHER" id="PTHR43096:SF48">
    <property type="entry name" value="CHAPERONE PROTEIN DNAJ"/>
    <property type="match status" value="1"/>
</dbReference>
<dbReference type="PANTHER" id="PTHR43096">
    <property type="entry name" value="DNAJ HOMOLOG 1, MITOCHONDRIAL-RELATED"/>
    <property type="match status" value="1"/>
</dbReference>
<dbReference type="Pfam" id="PF00226">
    <property type="entry name" value="DnaJ"/>
    <property type="match status" value="1"/>
</dbReference>
<dbReference type="Pfam" id="PF01556">
    <property type="entry name" value="DnaJ_C"/>
    <property type="match status" value="1"/>
</dbReference>
<dbReference type="Pfam" id="PF00684">
    <property type="entry name" value="DnaJ_CXXCXGXG"/>
    <property type="match status" value="1"/>
</dbReference>
<dbReference type="PRINTS" id="PR00625">
    <property type="entry name" value="JDOMAIN"/>
</dbReference>
<dbReference type="SMART" id="SM00271">
    <property type="entry name" value="DnaJ"/>
    <property type="match status" value="1"/>
</dbReference>
<dbReference type="SUPFAM" id="SSF46565">
    <property type="entry name" value="Chaperone J-domain"/>
    <property type="match status" value="1"/>
</dbReference>
<dbReference type="SUPFAM" id="SSF57938">
    <property type="entry name" value="DnaJ/Hsp40 cysteine-rich domain"/>
    <property type="match status" value="1"/>
</dbReference>
<dbReference type="SUPFAM" id="SSF49493">
    <property type="entry name" value="HSP40/DnaJ peptide-binding domain"/>
    <property type="match status" value="2"/>
</dbReference>
<dbReference type="PROSITE" id="PS00636">
    <property type="entry name" value="DNAJ_1"/>
    <property type="match status" value="1"/>
</dbReference>
<dbReference type="PROSITE" id="PS50076">
    <property type="entry name" value="DNAJ_2"/>
    <property type="match status" value="1"/>
</dbReference>
<dbReference type="PROSITE" id="PS51188">
    <property type="entry name" value="ZF_CR"/>
    <property type="match status" value="1"/>
</dbReference>
<keyword id="KW-0143">Chaperone</keyword>
<keyword id="KW-0963">Cytoplasm</keyword>
<keyword id="KW-0235">DNA replication</keyword>
<keyword id="KW-0479">Metal-binding</keyword>
<keyword id="KW-1185">Reference proteome</keyword>
<keyword id="KW-0677">Repeat</keyword>
<keyword id="KW-0346">Stress response</keyword>
<keyword id="KW-0862">Zinc</keyword>
<keyword id="KW-0863">Zinc-finger</keyword>